<gene>
    <name evidence="1" type="primary">rplN</name>
    <name type="ordered locus">BCc_331</name>
</gene>
<reference key="1">
    <citation type="journal article" date="2006" name="Science">
        <title>A small microbial genome: the end of a long symbiotic relationship?</title>
        <authorList>
            <person name="Perez-Brocal V."/>
            <person name="Gil R."/>
            <person name="Ramos S."/>
            <person name="Lamelas A."/>
            <person name="Postigo M."/>
            <person name="Michelena J.M."/>
            <person name="Silva F.J."/>
            <person name="Moya A."/>
            <person name="Latorre A."/>
        </authorList>
    </citation>
    <scope>NUCLEOTIDE SEQUENCE [LARGE SCALE GENOMIC DNA]</scope>
    <source>
        <strain>Cc</strain>
    </source>
</reference>
<protein>
    <recommendedName>
        <fullName evidence="1">Large ribosomal subunit protein uL14</fullName>
    </recommendedName>
    <alternativeName>
        <fullName evidence="2">50S ribosomal protein L14</fullName>
    </alternativeName>
</protein>
<comment type="function">
    <text evidence="1">Binds to 23S rRNA. Forms part of two intersubunit bridges in the 70S ribosome.</text>
</comment>
<comment type="subunit">
    <text evidence="1">Part of the 50S ribosomal subunit. Forms a cluster with proteins L3 and L19. In the 70S ribosome, L14 and L19 interact and together make contacts with the 16S rRNA in bridges B5 and B8.</text>
</comment>
<comment type="similarity">
    <text evidence="1">Belongs to the universal ribosomal protein uL14 family.</text>
</comment>
<proteinExistence type="inferred from homology"/>
<feature type="chain" id="PRO_1000055530" description="Large ribosomal subunit protein uL14">
    <location>
        <begin position="1"/>
        <end position="123"/>
    </location>
</feature>
<dbReference type="EMBL" id="CP000263">
    <property type="protein sequence ID" value="ABJ90785.1"/>
    <property type="molecule type" value="Genomic_DNA"/>
</dbReference>
<dbReference type="RefSeq" id="WP_011672704.1">
    <property type="nucleotide sequence ID" value="NC_008513.1"/>
</dbReference>
<dbReference type="SMR" id="Q057B4"/>
<dbReference type="STRING" id="372461.BCc_331"/>
<dbReference type="KEGG" id="bcc:BCc_331"/>
<dbReference type="eggNOG" id="COG0093">
    <property type="taxonomic scope" value="Bacteria"/>
</dbReference>
<dbReference type="HOGENOM" id="CLU_095071_2_1_6"/>
<dbReference type="OrthoDB" id="9806379at2"/>
<dbReference type="Proteomes" id="UP000000669">
    <property type="component" value="Chromosome"/>
</dbReference>
<dbReference type="GO" id="GO:0022625">
    <property type="term" value="C:cytosolic large ribosomal subunit"/>
    <property type="evidence" value="ECO:0007669"/>
    <property type="project" value="TreeGrafter"/>
</dbReference>
<dbReference type="GO" id="GO:0070180">
    <property type="term" value="F:large ribosomal subunit rRNA binding"/>
    <property type="evidence" value="ECO:0007669"/>
    <property type="project" value="TreeGrafter"/>
</dbReference>
<dbReference type="GO" id="GO:0003735">
    <property type="term" value="F:structural constituent of ribosome"/>
    <property type="evidence" value="ECO:0007669"/>
    <property type="project" value="InterPro"/>
</dbReference>
<dbReference type="GO" id="GO:0006412">
    <property type="term" value="P:translation"/>
    <property type="evidence" value="ECO:0007669"/>
    <property type="project" value="UniProtKB-UniRule"/>
</dbReference>
<dbReference type="CDD" id="cd00337">
    <property type="entry name" value="Ribosomal_uL14"/>
    <property type="match status" value="1"/>
</dbReference>
<dbReference type="FunFam" id="2.40.150.20:FF:000001">
    <property type="entry name" value="50S ribosomal protein L14"/>
    <property type="match status" value="1"/>
</dbReference>
<dbReference type="Gene3D" id="2.40.150.20">
    <property type="entry name" value="Ribosomal protein L14"/>
    <property type="match status" value="1"/>
</dbReference>
<dbReference type="HAMAP" id="MF_01367">
    <property type="entry name" value="Ribosomal_uL14"/>
    <property type="match status" value="1"/>
</dbReference>
<dbReference type="InterPro" id="IPR000218">
    <property type="entry name" value="Ribosomal_uL14"/>
</dbReference>
<dbReference type="InterPro" id="IPR005745">
    <property type="entry name" value="Ribosomal_uL14_bac-type"/>
</dbReference>
<dbReference type="InterPro" id="IPR019972">
    <property type="entry name" value="Ribosomal_uL14_CS"/>
</dbReference>
<dbReference type="InterPro" id="IPR036853">
    <property type="entry name" value="Ribosomal_uL14_sf"/>
</dbReference>
<dbReference type="NCBIfam" id="TIGR01067">
    <property type="entry name" value="rplN_bact"/>
    <property type="match status" value="1"/>
</dbReference>
<dbReference type="PANTHER" id="PTHR11761">
    <property type="entry name" value="50S/60S RIBOSOMAL PROTEIN L14/L23"/>
    <property type="match status" value="1"/>
</dbReference>
<dbReference type="PANTHER" id="PTHR11761:SF3">
    <property type="entry name" value="LARGE RIBOSOMAL SUBUNIT PROTEIN UL14M"/>
    <property type="match status" value="1"/>
</dbReference>
<dbReference type="Pfam" id="PF00238">
    <property type="entry name" value="Ribosomal_L14"/>
    <property type="match status" value="1"/>
</dbReference>
<dbReference type="SMART" id="SM01374">
    <property type="entry name" value="Ribosomal_L14"/>
    <property type="match status" value="1"/>
</dbReference>
<dbReference type="SUPFAM" id="SSF50193">
    <property type="entry name" value="Ribosomal protein L14"/>
    <property type="match status" value="1"/>
</dbReference>
<dbReference type="PROSITE" id="PS00049">
    <property type="entry name" value="RIBOSOMAL_L14"/>
    <property type="match status" value="1"/>
</dbReference>
<sequence>MIQVQTILNVADNSGARLVMCIKVLGGSRRRYANIGDIIKVAIKEAIPRGKVKKGEVVKAVVVRTKKGIRRTDGSMICFDNNSCVIVHDTTNQPIGTRIFGPVTRELRVEKFMKIISLAPEVL</sequence>
<organism>
    <name type="scientific">Buchnera aphidicola subsp. Cinara cedri (strain Cc)</name>
    <dbReference type="NCBI Taxonomy" id="372461"/>
    <lineage>
        <taxon>Bacteria</taxon>
        <taxon>Pseudomonadati</taxon>
        <taxon>Pseudomonadota</taxon>
        <taxon>Gammaproteobacteria</taxon>
        <taxon>Enterobacterales</taxon>
        <taxon>Erwiniaceae</taxon>
        <taxon>Buchnera</taxon>
    </lineage>
</organism>
<evidence type="ECO:0000255" key="1">
    <source>
        <dbReference type="HAMAP-Rule" id="MF_01367"/>
    </source>
</evidence>
<evidence type="ECO:0000305" key="2"/>
<keyword id="KW-1185">Reference proteome</keyword>
<keyword id="KW-0687">Ribonucleoprotein</keyword>
<keyword id="KW-0689">Ribosomal protein</keyword>
<keyword id="KW-0694">RNA-binding</keyword>
<keyword id="KW-0699">rRNA-binding</keyword>
<name>RL14_BUCCC</name>
<accession>Q057B4</accession>